<sequence length="158" mass="18656">MARMHARKRGKSGSKRPPRTAPPIWLEYTVEDIENLVVKLRKEGYSTAMIGTILRDQYGIPTVKLFRDPDNPNRKLTITRILEKHGLAPEIPEDLMFLIKRAVNLRKHLEQHPKDLHSMRGLQLIESKIRRLVKYYKRKGKLPKDWRYDPEQAKLLVR</sequence>
<dbReference type="EMBL" id="AJ248283">
    <property type="protein sequence ID" value="CAB48989.1"/>
    <property type="molecule type" value="Genomic_DNA"/>
</dbReference>
<dbReference type="EMBL" id="HE613800">
    <property type="protein sequence ID" value="CCE69438.1"/>
    <property type="molecule type" value="Genomic_DNA"/>
</dbReference>
<dbReference type="PIR" id="F75192">
    <property type="entry name" value="F75192"/>
</dbReference>
<dbReference type="RefSeq" id="WP_010867190.1">
    <property type="nucleotide sequence ID" value="NC_000868.1"/>
</dbReference>
<dbReference type="PDB" id="6SW9">
    <property type="method" value="EM"/>
    <property type="resolution" value="4.20 A"/>
    <property type="chains" value="Q=1-158"/>
</dbReference>
<dbReference type="PDB" id="6SWC">
    <property type="method" value="EM"/>
    <property type="resolution" value="3.30 A"/>
    <property type="chains" value="Q=1-158"/>
</dbReference>
<dbReference type="PDB" id="6SWD">
    <property type="method" value="EM"/>
    <property type="resolution" value="3.20 A"/>
    <property type="chains" value="Q=1-158"/>
</dbReference>
<dbReference type="PDB" id="7ZAG">
    <property type="method" value="EM"/>
    <property type="resolution" value="2.77 A"/>
    <property type="chains" value="Q=1-158"/>
</dbReference>
<dbReference type="PDB" id="7ZAH">
    <property type="method" value="EM"/>
    <property type="resolution" value="2.70 A"/>
    <property type="chains" value="Q=1-158"/>
</dbReference>
<dbReference type="PDB" id="7ZAI">
    <property type="method" value="EM"/>
    <property type="resolution" value="2.60 A"/>
    <property type="chains" value="Q=1-158"/>
</dbReference>
<dbReference type="PDB" id="7ZHG">
    <property type="method" value="EM"/>
    <property type="resolution" value="2.25 A"/>
    <property type="chains" value="Q=1-158"/>
</dbReference>
<dbReference type="PDBsum" id="6SW9"/>
<dbReference type="PDBsum" id="6SWC"/>
<dbReference type="PDBsum" id="6SWD"/>
<dbReference type="PDBsum" id="7ZAG"/>
<dbReference type="PDBsum" id="7ZAH"/>
<dbReference type="PDBsum" id="7ZAI"/>
<dbReference type="PDBsum" id="7ZHG"/>
<dbReference type="EMDB" id="EMD-10320"/>
<dbReference type="EMDB" id="EMD-10322"/>
<dbReference type="EMDB" id="EMD-10323"/>
<dbReference type="EMDB" id="EMD-14579"/>
<dbReference type="EMDB" id="EMD-14580"/>
<dbReference type="EMDB" id="EMD-14581"/>
<dbReference type="EMDB" id="EMD-14731"/>
<dbReference type="EMDB" id="EMD-8148"/>
<dbReference type="SMR" id="Q9V2K9"/>
<dbReference type="STRING" id="272844.PAB0033"/>
<dbReference type="KEGG" id="pab:PAB0033"/>
<dbReference type="PATRIC" id="fig|272844.11.peg.74"/>
<dbReference type="eggNOG" id="arCOG04185">
    <property type="taxonomic scope" value="Archaea"/>
</dbReference>
<dbReference type="HOGENOM" id="CLU_090139_2_0_2"/>
<dbReference type="OrthoDB" id="6533at2157"/>
<dbReference type="PhylomeDB" id="Q9V2K9"/>
<dbReference type="Proteomes" id="UP000000810">
    <property type="component" value="Chromosome"/>
</dbReference>
<dbReference type="Proteomes" id="UP000009139">
    <property type="component" value="Chromosome"/>
</dbReference>
<dbReference type="GO" id="GO:0022627">
    <property type="term" value="C:cytosolic small ribosomal subunit"/>
    <property type="evidence" value="ECO:0007669"/>
    <property type="project" value="TreeGrafter"/>
</dbReference>
<dbReference type="GO" id="GO:0070181">
    <property type="term" value="F:small ribosomal subunit rRNA binding"/>
    <property type="evidence" value="ECO:0007669"/>
    <property type="project" value="TreeGrafter"/>
</dbReference>
<dbReference type="GO" id="GO:0003735">
    <property type="term" value="F:structural constituent of ribosome"/>
    <property type="evidence" value="ECO:0007669"/>
    <property type="project" value="InterPro"/>
</dbReference>
<dbReference type="GO" id="GO:0006412">
    <property type="term" value="P:translation"/>
    <property type="evidence" value="ECO:0007669"/>
    <property type="project" value="UniProtKB-UniRule"/>
</dbReference>
<dbReference type="CDD" id="cd00353">
    <property type="entry name" value="Ribosomal_S15p_S13e"/>
    <property type="match status" value="1"/>
</dbReference>
<dbReference type="FunFam" id="1.10.287.10:FF:000003">
    <property type="entry name" value="40S ribosomal protein S13"/>
    <property type="match status" value="1"/>
</dbReference>
<dbReference type="Gene3D" id="4.10.860.130">
    <property type="match status" value="1"/>
</dbReference>
<dbReference type="Gene3D" id="1.10.287.10">
    <property type="entry name" value="S15/NS1, RNA-binding"/>
    <property type="match status" value="1"/>
</dbReference>
<dbReference type="HAMAP" id="MF_01343_A">
    <property type="entry name" value="Ribosomal_uS15_A"/>
    <property type="match status" value="1"/>
</dbReference>
<dbReference type="InterPro" id="IPR000589">
    <property type="entry name" value="Ribosomal_uS15"/>
</dbReference>
<dbReference type="InterPro" id="IPR023029">
    <property type="entry name" value="Ribosomal_uS15_arc_euk"/>
</dbReference>
<dbReference type="InterPro" id="IPR012606">
    <property type="entry name" value="Ribosomal_uS15_N"/>
</dbReference>
<dbReference type="InterPro" id="IPR009068">
    <property type="entry name" value="uS15_NS1_RNA-bd_sf"/>
</dbReference>
<dbReference type="NCBIfam" id="NF006331">
    <property type="entry name" value="PRK08561.1"/>
    <property type="match status" value="1"/>
</dbReference>
<dbReference type="PANTHER" id="PTHR11885">
    <property type="entry name" value="RIBOSOMAL PROTEIN S15P/S13E"/>
    <property type="match status" value="1"/>
</dbReference>
<dbReference type="PANTHER" id="PTHR11885:SF6">
    <property type="entry name" value="SMALL RIBOSOMAL SUBUNIT PROTEIN US15"/>
    <property type="match status" value="1"/>
</dbReference>
<dbReference type="Pfam" id="PF08069">
    <property type="entry name" value="Ribosomal_S13_N"/>
    <property type="match status" value="1"/>
</dbReference>
<dbReference type="Pfam" id="PF00312">
    <property type="entry name" value="Ribosomal_S15"/>
    <property type="match status" value="1"/>
</dbReference>
<dbReference type="SMART" id="SM01386">
    <property type="entry name" value="Ribosomal_S13_N"/>
    <property type="match status" value="1"/>
</dbReference>
<dbReference type="SMART" id="SM01387">
    <property type="entry name" value="Ribosomal_S15"/>
    <property type="match status" value="1"/>
</dbReference>
<dbReference type="SUPFAM" id="SSF47060">
    <property type="entry name" value="S15/NS1 RNA-binding domain"/>
    <property type="match status" value="1"/>
</dbReference>
<dbReference type="PROSITE" id="PS00362">
    <property type="entry name" value="RIBOSOMAL_S15"/>
    <property type="match status" value="1"/>
</dbReference>
<protein>
    <recommendedName>
        <fullName evidence="1">Small ribosomal subunit protein uS15</fullName>
    </recommendedName>
    <alternativeName>
        <fullName evidence="3">30S ribosomal protein S15</fullName>
    </alternativeName>
</protein>
<comment type="subunit">
    <text evidence="1">Part of the 30S ribosomal subunit.</text>
</comment>
<comment type="similarity">
    <text evidence="1">Belongs to the universal ribosomal protein uS15 family.</text>
</comment>
<gene>
    <name evidence="1" type="primary">rps15</name>
    <name type="ordered locus">PYRAB00660</name>
    <name type="ORF">PAB0033</name>
</gene>
<accession>Q9V2K9</accession>
<accession>G8ZFP7</accession>
<keyword id="KW-0002">3D-structure</keyword>
<keyword id="KW-0687">Ribonucleoprotein</keyword>
<keyword id="KW-0689">Ribosomal protein</keyword>
<reference key="1">
    <citation type="journal article" date="2003" name="Mol. Microbiol.">
        <title>An integrated analysis of the genome of the hyperthermophilic archaeon Pyrococcus abyssi.</title>
        <authorList>
            <person name="Cohen G.N."/>
            <person name="Barbe V."/>
            <person name="Flament D."/>
            <person name="Galperin M."/>
            <person name="Heilig R."/>
            <person name="Lecompte O."/>
            <person name="Poch O."/>
            <person name="Prieur D."/>
            <person name="Querellou J."/>
            <person name="Ripp R."/>
            <person name="Thierry J.-C."/>
            <person name="Van der Oost J."/>
            <person name="Weissenbach J."/>
            <person name="Zivanovic Y."/>
            <person name="Forterre P."/>
        </authorList>
    </citation>
    <scope>NUCLEOTIDE SEQUENCE [LARGE SCALE GENOMIC DNA]</scope>
    <source>
        <strain>GE5 / Orsay</strain>
    </source>
</reference>
<reference key="2">
    <citation type="journal article" date="2012" name="Curr. Microbiol.">
        <title>Re-annotation of two hyperthermophilic archaea Pyrococcus abyssi GE5 and Pyrococcus furiosus DSM 3638.</title>
        <authorList>
            <person name="Gao J."/>
            <person name="Wang J."/>
        </authorList>
    </citation>
    <scope>GENOME REANNOTATION</scope>
    <source>
        <strain>GE5 / Orsay</strain>
    </source>
</reference>
<proteinExistence type="evidence at protein level"/>
<feature type="chain" id="PRO_0000115616" description="Small ribosomal subunit protein uS15">
    <location>
        <begin position="1"/>
        <end position="158"/>
    </location>
</feature>
<feature type="region of interest" description="Disordered" evidence="2">
    <location>
        <begin position="1"/>
        <end position="21"/>
    </location>
</feature>
<feature type="compositionally biased region" description="Basic residues" evidence="2">
    <location>
        <begin position="1"/>
        <end position="18"/>
    </location>
</feature>
<feature type="turn" evidence="5">
    <location>
        <begin position="4"/>
        <end position="6"/>
    </location>
</feature>
<feature type="helix" evidence="5">
    <location>
        <begin position="30"/>
        <end position="42"/>
    </location>
</feature>
<feature type="helix" evidence="5">
    <location>
        <begin position="47"/>
        <end position="58"/>
    </location>
</feature>
<feature type="strand" evidence="4">
    <location>
        <begin position="66"/>
        <end position="68"/>
    </location>
</feature>
<feature type="strand" evidence="4">
    <location>
        <begin position="71"/>
        <end position="75"/>
    </location>
</feature>
<feature type="helix" evidence="5">
    <location>
        <begin position="78"/>
        <end position="84"/>
    </location>
</feature>
<feature type="helix" evidence="5">
    <location>
        <begin position="93"/>
        <end position="111"/>
    </location>
</feature>
<feature type="helix" evidence="5">
    <location>
        <begin position="116"/>
        <end position="139"/>
    </location>
</feature>
<organism>
    <name type="scientific">Pyrococcus abyssi (strain GE5 / Orsay)</name>
    <dbReference type="NCBI Taxonomy" id="272844"/>
    <lineage>
        <taxon>Archaea</taxon>
        <taxon>Methanobacteriati</taxon>
        <taxon>Methanobacteriota</taxon>
        <taxon>Thermococci</taxon>
        <taxon>Thermococcales</taxon>
        <taxon>Thermococcaceae</taxon>
        <taxon>Pyrococcus</taxon>
    </lineage>
</organism>
<name>RS15_PYRAB</name>
<evidence type="ECO:0000255" key="1">
    <source>
        <dbReference type="HAMAP-Rule" id="MF_01343"/>
    </source>
</evidence>
<evidence type="ECO:0000256" key="2">
    <source>
        <dbReference type="SAM" id="MobiDB-lite"/>
    </source>
</evidence>
<evidence type="ECO:0000305" key="3"/>
<evidence type="ECO:0007829" key="4">
    <source>
        <dbReference type="PDB" id="6SWD"/>
    </source>
</evidence>
<evidence type="ECO:0007829" key="5">
    <source>
        <dbReference type="PDB" id="7ZHG"/>
    </source>
</evidence>